<name>PYRF_BRUME</name>
<comment type="function">
    <text evidence="1">Catalyzes the decarboxylation of orotidine 5'-monophosphate (OMP) to uridine 5'-monophosphate (UMP).</text>
</comment>
<comment type="catalytic activity">
    <reaction evidence="1">
        <text>orotidine 5'-phosphate + H(+) = UMP + CO2</text>
        <dbReference type="Rhea" id="RHEA:11596"/>
        <dbReference type="ChEBI" id="CHEBI:15378"/>
        <dbReference type="ChEBI" id="CHEBI:16526"/>
        <dbReference type="ChEBI" id="CHEBI:57538"/>
        <dbReference type="ChEBI" id="CHEBI:57865"/>
        <dbReference type="EC" id="4.1.1.23"/>
    </reaction>
</comment>
<comment type="pathway">
    <text evidence="1">Pyrimidine metabolism; UMP biosynthesis via de novo pathway; UMP from orotate: step 2/2.</text>
</comment>
<comment type="subunit">
    <text evidence="1">Homodimer.</text>
</comment>
<comment type="similarity">
    <text evidence="1">Belongs to the OMP decarboxylase family. Type 1 subfamily.</text>
</comment>
<comment type="sequence caution" evidence="2">
    <conflict type="erroneous initiation">
        <sequence resource="EMBL-CDS" id="AAL53180"/>
    </conflict>
</comment>
<keyword id="KW-0210">Decarboxylase</keyword>
<keyword id="KW-0456">Lyase</keyword>
<keyword id="KW-0665">Pyrimidine biosynthesis</keyword>
<accession>Q8YE79</accession>
<proteinExistence type="inferred from homology"/>
<feature type="chain" id="PRO_0000134530" description="Orotidine 5'-phosphate decarboxylase">
    <location>
        <begin position="1"/>
        <end position="238"/>
    </location>
</feature>
<feature type="active site" description="Proton donor" evidence="1">
    <location>
        <position position="69"/>
    </location>
</feature>
<feature type="binding site" evidence="1">
    <location>
        <position position="18"/>
    </location>
    <ligand>
        <name>substrate</name>
    </ligand>
</feature>
<feature type="binding site" evidence="1">
    <location>
        <position position="40"/>
    </location>
    <ligand>
        <name>substrate</name>
    </ligand>
</feature>
<feature type="binding site" evidence="1">
    <location>
        <begin position="67"/>
        <end position="76"/>
    </location>
    <ligand>
        <name>substrate</name>
    </ligand>
</feature>
<feature type="binding site" evidence="1">
    <location>
        <position position="122"/>
    </location>
    <ligand>
        <name>substrate</name>
    </ligand>
</feature>
<feature type="binding site" evidence="1">
    <location>
        <position position="183"/>
    </location>
    <ligand>
        <name>substrate</name>
    </ligand>
</feature>
<feature type="binding site" evidence="1">
    <location>
        <position position="192"/>
    </location>
    <ligand>
        <name>substrate</name>
    </ligand>
</feature>
<feature type="binding site" evidence="1">
    <location>
        <position position="213"/>
    </location>
    <ligand>
        <name>substrate</name>
    </ligand>
</feature>
<gene>
    <name evidence="1" type="primary">pyrF</name>
    <name type="ordered locus">BMEI1999</name>
</gene>
<reference key="1">
    <citation type="journal article" date="2002" name="Proc. Natl. Acad. Sci. U.S.A.">
        <title>The genome sequence of the facultative intracellular pathogen Brucella melitensis.</title>
        <authorList>
            <person name="DelVecchio V.G."/>
            <person name="Kapatral V."/>
            <person name="Redkar R.J."/>
            <person name="Patra G."/>
            <person name="Mujer C."/>
            <person name="Los T."/>
            <person name="Ivanova N."/>
            <person name="Anderson I."/>
            <person name="Bhattacharyya A."/>
            <person name="Lykidis A."/>
            <person name="Reznik G."/>
            <person name="Jablonski L."/>
            <person name="Larsen N."/>
            <person name="D'Souza M."/>
            <person name="Bernal A."/>
            <person name="Mazur M."/>
            <person name="Goltsman E."/>
            <person name="Selkov E."/>
            <person name="Elzer P.H."/>
            <person name="Hagius S."/>
            <person name="O'Callaghan D."/>
            <person name="Letesson J.-J."/>
            <person name="Haselkorn R."/>
            <person name="Kyrpides N.C."/>
            <person name="Overbeek R."/>
        </authorList>
    </citation>
    <scope>NUCLEOTIDE SEQUENCE [LARGE SCALE GENOMIC DNA]</scope>
    <source>
        <strain>ATCC 23456 / CCUG 17765 / NCTC 10094 / 16M</strain>
    </source>
</reference>
<dbReference type="EC" id="4.1.1.23" evidence="1"/>
<dbReference type="EMBL" id="AE008917">
    <property type="protein sequence ID" value="AAL53180.1"/>
    <property type="status" value="ALT_INIT"/>
    <property type="molecule type" value="Genomic_DNA"/>
</dbReference>
<dbReference type="PIR" id="AI3501">
    <property type="entry name" value="AI3501"/>
</dbReference>
<dbReference type="RefSeq" id="WP_004684566.1">
    <property type="nucleotide sequence ID" value="NZ_GG703778.1"/>
</dbReference>
<dbReference type="SMR" id="Q8YE79"/>
<dbReference type="GeneID" id="29594882"/>
<dbReference type="KEGG" id="bme:BMEI1999"/>
<dbReference type="KEGG" id="bmel:DK63_1492"/>
<dbReference type="PATRIC" id="fig|224914.52.peg.1573"/>
<dbReference type="eggNOG" id="COG0284">
    <property type="taxonomic scope" value="Bacteria"/>
</dbReference>
<dbReference type="PhylomeDB" id="Q8YE79"/>
<dbReference type="UniPathway" id="UPA00070">
    <property type="reaction ID" value="UER00120"/>
</dbReference>
<dbReference type="Proteomes" id="UP000000419">
    <property type="component" value="Chromosome I"/>
</dbReference>
<dbReference type="GO" id="GO:0005829">
    <property type="term" value="C:cytosol"/>
    <property type="evidence" value="ECO:0007669"/>
    <property type="project" value="TreeGrafter"/>
</dbReference>
<dbReference type="GO" id="GO:0004590">
    <property type="term" value="F:orotidine-5'-phosphate decarboxylase activity"/>
    <property type="evidence" value="ECO:0007669"/>
    <property type="project" value="UniProtKB-UniRule"/>
</dbReference>
<dbReference type="GO" id="GO:0006207">
    <property type="term" value="P:'de novo' pyrimidine nucleobase biosynthetic process"/>
    <property type="evidence" value="ECO:0007669"/>
    <property type="project" value="InterPro"/>
</dbReference>
<dbReference type="GO" id="GO:0044205">
    <property type="term" value="P:'de novo' UMP biosynthetic process"/>
    <property type="evidence" value="ECO:0007669"/>
    <property type="project" value="UniProtKB-UniRule"/>
</dbReference>
<dbReference type="CDD" id="cd04725">
    <property type="entry name" value="OMP_decarboxylase_like"/>
    <property type="match status" value="1"/>
</dbReference>
<dbReference type="Gene3D" id="3.20.20.70">
    <property type="entry name" value="Aldolase class I"/>
    <property type="match status" value="1"/>
</dbReference>
<dbReference type="HAMAP" id="MF_01200_B">
    <property type="entry name" value="OMPdecase_type1_B"/>
    <property type="match status" value="1"/>
</dbReference>
<dbReference type="InterPro" id="IPR013785">
    <property type="entry name" value="Aldolase_TIM"/>
</dbReference>
<dbReference type="InterPro" id="IPR014732">
    <property type="entry name" value="OMPdecase"/>
</dbReference>
<dbReference type="InterPro" id="IPR018089">
    <property type="entry name" value="OMPdecase_AS"/>
</dbReference>
<dbReference type="InterPro" id="IPR047596">
    <property type="entry name" value="OMPdecase_bac"/>
</dbReference>
<dbReference type="InterPro" id="IPR001754">
    <property type="entry name" value="OMPdeCOase_dom"/>
</dbReference>
<dbReference type="InterPro" id="IPR011060">
    <property type="entry name" value="RibuloseP-bd_barrel"/>
</dbReference>
<dbReference type="NCBIfam" id="NF001273">
    <property type="entry name" value="PRK00230.1"/>
    <property type="match status" value="1"/>
</dbReference>
<dbReference type="NCBIfam" id="TIGR01740">
    <property type="entry name" value="pyrF"/>
    <property type="match status" value="1"/>
</dbReference>
<dbReference type="PANTHER" id="PTHR32119">
    <property type="entry name" value="OROTIDINE 5'-PHOSPHATE DECARBOXYLASE"/>
    <property type="match status" value="1"/>
</dbReference>
<dbReference type="PANTHER" id="PTHR32119:SF2">
    <property type="entry name" value="OROTIDINE 5'-PHOSPHATE DECARBOXYLASE"/>
    <property type="match status" value="1"/>
</dbReference>
<dbReference type="Pfam" id="PF00215">
    <property type="entry name" value="OMPdecase"/>
    <property type="match status" value="1"/>
</dbReference>
<dbReference type="SMART" id="SM00934">
    <property type="entry name" value="OMPdecase"/>
    <property type="match status" value="1"/>
</dbReference>
<dbReference type="SUPFAM" id="SSF51366">
    <property type="entry name" value="Ribulose-phoshate binding barrel"/>
    <property type="match status" value="1"/>
</dbReference>
<dbReference type="PROSITE" id="PS00156">
    <property type="entry name" value="OMPDECASE"/>
    <property type="match status" value="1"/>
</dbReference>
<protein>
    <recommendedName>
        <fullName evidence="1">Orotidine 5'-phosphate decarboxylase</fullName>
        <ecNumber evidence="1">4.1.1.23</ecNumber>
    </recommendedName>
    <alternativeName>
        <fullName evidence="1">OMP decarboxylase</fullName>
        <shortName evidence="1">OMPDCase</shortName>
        <shortName evidence="1">OMPdecase</shortName>
    </alternativeName>
</protein>
<sequence>MTTELHDDASGRLIVGLDVPTIAEAEKVVEELGNAVSFYKIGYQLVFAGGLDFAKSLVAARKKVFLDMKLLDIDNTIAKGVENVAKMGVSMLTLHAYPKAMRAAVEAARGSDLCLLGVTVLTSMDNADLREAGYFDNAETLVLKRARQAHEAGMGGIVASAVEAQAIRQAVGPDMAIVTPGIRPAGSEKGDQKRVMTPADALRAGASHLIVARPIVGAPDRKAAALAILKEMRSIGRS</sequence>
<evidence type="ECO:0000255" key="1">
    <source>
        <dbReference type="HAMAP-Rule" id="MF_01200"/>
    </source>
</evidence>
<evidence type="ECO:0000305" key="2"/>
<organism>
    <name type="scientific">Brucella melitensis biotype 1 (strain ATCC 23456 / CCUG 17765 / NCTC 10094 / 16M)</name>
    <dbReference type="NCBI Taxonomy" id="224914"/>
    <lineage>
        <taxon>Bacteria</taxon>
        <taxon>Pseudomonadati</taxon>
        <taxon>Pseudomonadota</taxon>
        <taxon>Alphaproteobacteria</taxon>
        <taxon>Hyphomicrobiales</taxon>
        <taxon>Brucellaceae</taxon>
        <taxon>Brucella/Ochrobactrum group</taxon>
        <taxon>Brucella</taxon>
    </lineage>
</organism>